<organism>
    <name type="scientific">Campylobacter jejuni subsp. jejuni serotype O:2 (strain ATCC 700819 / NCTC 11168)</name>
    <dbReference type="NCBI Taxonomy" id="192222"/>
    <lineage>
        <taxon>Bacteria</taxon>
        <taxon>Pseudomonadati</taxon>
        <taxon>Campylobacterota</taxon>
        <taxon>Epsilonproteobacteria</taxon>
        <taxon>Campylobacterales</taxon>
        <taxon>Campylobacteraceae</taxon>
        <taxon>Campylobacter</taxon>
    </lineage>
</organism>
<proteinExistence type="inferred from homology"/>
<feature type="chain" id="PRO_0000110520" description="Putative 3-oxoacyl-[acyl-carrier-protein] synthase 3">
    <location>
        <begin position="1"/>
        <end position="353"/>
    </location>
</feature>
<feature type="active site" evidence="1">
    <location>
        <position position="122"/>
    </location>
</feature>
<feature type="active site" evidence="1">
    <location>
        <position position="268"/>
    </location>
</feature>
<feature type="active site" evidence="1">
    <location>
        <position position="299"/>
    </location>
</feature>
<sequence>MKTRFDKAKISGICVSVPEHKICIDDELESVFSNDIKTLKRMKKVIGLNTRYICDENTCVSDLGKHAANTLLQGLNIDKNSLDALIVVTQSPDFFMPSTACYLHQLLNLSSKTVAFDLGQACAGYLYGLFVAHSLIQSGLGKILLICGDTLSKFIHPKNMNLAPIFGDGVSATLIEKTDFNEAFFELGSDGKYFDKLIIPKGAMRIPKADIFNDDSLMQTEEFRQLENLYMDGANIFNMALECEPKSFKEILEFSKVDEKDIAFHLFHQSNAYLVDCIKEELKLNDDKVPNFIMEKYANLSACSLPTLLCELDTPKEFKASLSAFGAGLSWGSAVLNFKDLYTKNILIYTKEK</sequence>
<evidence type="ECO:0000250" key="1"/>
<evidence type="ECO:0000305" key="2"/>
<accession>Q9PMZ6</accession>
<accession>Q0P8V4</accession>
<dbReference type="EC" id="2.3.1.180"/>
<dbReference type="EMBL" id="AL111168">
    <property type="protein sequence ID" value="CAL35417.1"/>
    <property type="molecule type" value="Genomic_DNA"/>
</dbReference>
<dbReference type="PIR" id="D81273">
    <property type="entry name" value="D81273"/>
</dbReference>
<dbReference type="RefSeq" id="WP_002789842.1">
    <property type="nucleotide sequence ID" value="NZ_SZUC01000001.1"/>
</dbReference>
<dbReference type="SMR" id="Q9PMZ6"/>
<dbReference type="IntAct" id="Q9PMZ6">
    <property type="interactions" value="39"/>
</dbReference>
<dbReference type="STRING" id="192222.Cj1303"/>
<dbReference type="PaxDb" id="192222-Cj1303"/>
<dbReference type="EnsemblBacteria" id="CAL35417">
    <property type="protein sequence ID" value="CAL35417"/>
    <property type="gene ID" value="Cj1303"/>
</dbReference>
<dbReference type="KEGG" id="cje:Cj1303"/>
<dbReference type="PATRIC" id="fig|192222.6.peg.1285"/>
<dbReference type="eggNOG" id="COG0332">
    <property type="taxonomic scope" value="Bacteria"/>
</dbReference>
<dbReference type="HOGENOM" id="CLU_039592_1_0_7"/>
<dbReference type="OrthoDB" id="9815506at2"/>
<dbReference type="UniPathway" id="UPA00094"/>
<dbReference type="Proteomes" id="UP000000799">
    <property type="component" value="Chromosome"/>
</dbReference>
<dbReference type="GO" id="GO:0005737">
    <property type="term" value="C:cytoplasm"/>
    <property type="evidence" value="ECO:0007669"/>
    <property type="project" value="UniProtKB-SubCell"/>
</dbReference>
<dbReference type="GO" id="GO:0004315">
    <property type="term" value="F:3-oxoacyl-[acyl-carrier-protein] synthase activity"/>
    <property type="evidence" value="ECO:0007669"/>
    <property type="project" value="InterPro"/>
</dbReference>
<dbReference type="GO" id="GO:0033818">
    <property type="term" value="F:beta-ketoacyl-acyl-carrier-protein synthase III activity"/>
    <property type="evidence" value="ECO:0007669"/>
    <property type="project" value="UniProtKB-EC"/>
</dbReference>
<dbReference type="GO" id="GO:0006633">
    <property type="term" value="P:fatty acid biosynthetic process"/>
    <property type="evidence" value="ECO:0007669"/>
    <property type="project" value="UniProtKB-UniPathway"/>
</dbReference>
<dbReference type="GO" id="GO:0044550">
    <property type="term" value="P:secondary metabolite biosynthetic process"/>
    <property type="evidence" value="ECO:0007669"/>
    <property type="project" value="TreeGrafter"/>
</dbReference>
<dbReference type="CDD" id="cd00830">
    <property type="entry name" value="KAS_III"/>
    <property type="match status" value="1"/>
</dbReference>
<dbReference type="Gene3D" id="3.40.47.10">
    <property type="match status" value="1"/>
</dbReference>
<dbReference type="InterPro" id="IPR013747">
    <property type="entry name" value="ACP_syn_III_C"/>
</dbReference>
<dbReference type="InterPro" id="IPR013751">
    <property type="entry name" value="ACP_syn_III_N"/>
</dbReference>
<dbReference type="InterPro" id="IPR016039">
    <property type="entry name" value="Thiolase-like"/>
</dbReference>
<dbReference type="NCBIfam" id="NF009519">
    <property type="entry name" value="PRK12880.1"/>
    <property type="match status" value="1"/>
</dbReference>
<dbReference type="PANTHER" id="PTHR34069">
    <property type="entry name" value="3-OXOACYL-[ACYL-CARRIER-PROTEIN] SYNTHASE 3"/>
    <property type="match status" value="1"/>
</dbReference>
<dbReference type="PANTHER" id="PTHR34069:SF2">
    <property type="entry name" value="BETA-KETOACYL-[ACYL-CARRIER-PROTEIN] SYNTHASE III"/>
    <property type="match status" value="1"/>
</dbReference>
<dbReference type="Pfam" id="PF08545">
    <property type="entry name" value="ACP_syn_III"/>
    <property type="match status" value="1"/>
</dbReference>
<dbReference type="Pfam" id="PF08541">
    <property type="entry name" value="ACP_syn_III_C"/>
    <property type="match status" value="1"/>
</dbReference>
<dbReference type="SUPFAM" id="SSF53901">
    <property type="entry name" value="Thiolase-like"/>
    <property type="match status" value="2"/>
</dbReference>
<reference key="1">
    <citation type="journal article" date="2000" name="Nature">
        <title>The genome sequence of the food-borne pathogen Campylobacter jejuni reveals hypervariable sequences.</title>
        <authorList>
            <person name="Parkhill J."/>
            <person name="Wren B.W."/>
            <person name="Mungall K.L."/>
            <person name="Ketley J.M."/>
            <person name="Churcher C.M."/>
            <person name="Basham D."/>
            <person name="Chillingworth T."/>
            <person name="Davies R.M."/>
            <person name="Feltwell T."/>
            <person name="Holroyd S."/>
            <person name="Jagels K."/>
            <person name="Karlyshev A.V."/>
            <person name="Moule S."/>
            <person name="Pallen M.J."/>
            <person name="Penn C.W."/>
            <person name="Quail M.A."/>
            <person name="Rajandream M.A."/>
            <person name="Rutherford K.M."/>
            <person name="van Vliet A.H.M."/>
            <person name="Whitehead S."/>
            <person name="Barrell B.G."/>
        </authorList>
    </citation>
    <scope>NUCLEOTIDE SEQUENCE [LARGE SCALE GENOMIC DNA]</scope>
    <source>
        <strain>ATCC 700819 / NCTC 11168</strain>
    </source>
</reference>
<name>FABHL_CAMJE</name>
<protein>
    <recommendedName>
        <fullName>Putative 3-oxoacyl-[acyl-carrier-protein] synthase 3</fullName>
        <ecNumber>2.3.1.180</ecNumber>
    </recommendedName>
    <alternativeName>
        <fullName>3-oxoacyl-[acyl-carrier-protein] synthase III</fullName>
    </alternativeName>
    <alternativeName>
        <fullName>Beta-ketoacyl-ACP synthase III</fullName>
        <shortName>KAS III</shortName>
    </alternativeName>
</protein>
<comment type="function">
    <text evidence="1">May catalyze the condensation reaction of fatty acid synthesis by the addition to an acyl acceptor of two carbons from malonyl-ACP.</text>
</comment>
<comment type="catalytic activity">
    <reaction>
        <text>malonyl-[ACP] + acetyl-CoA + H(+) = 3-oxobutanoyl-[ACP] + CO2 + CoA</text>
        <dbReference type="Rhea" id="RHEA:12080"/>
        <dbReference type="Rhea" id="RHEA-COMP:9623"/>
        <dbReference type="Rhea" id="RHEA-COMP:9625"/>
        <dbReference type="ChEBI" id="CHEBI:15378"/>
        <dbReference type="ChEBI" id="CHEBI:16526"/>
        <dbReference type="ChEBI" id="CHEBI:57287"/>
        <dbReference type="ChEBI" id="CHEBI:57288"/>
        <dbReference type="ChEBI" id="CHEBI:78449"/>
        <dbReference type="ChEBI" id="CHEBI:78450"/>
        <dbReference type="EC" id="2.3.1.180"/>
    </reaction>
</comment>
<comment type="pathway">
    <text>Lipid metabolism; fatty acid biosynthesis.</text>
</comment>
<comment type="subunit">
    <text evidence="1">Homodimer.</text>
</comment>
<comment type="subcellular location">
    <subcellularLocation>
        <location evidence="2">Cytoplasm</location>
    </subcellularLocation>
</comment>
<comment type="similarity">
    <text evidence="2">Belongs to the thiolase-like superfamily. FabH family.</text>
</comment>
<comment type="caution">
    <text evidence="2">Lacks the Asn-Xaa-Arg residues, which are typical of the ACP-binding site and are essential for the association between AcpP and FabH.</text>
</comment>
<keyword id="KW-0012">Acyltransferase</keyword>
<keyword id="KW-0963">Cytoplasm</keyword>
<keyword id="KW-0275">Fatty acid biosynthesis</keyword>
<keyword id="KW-0276">Fatty acid metabolism</keyword>
<keyword id="KW-0444">Lipid biosynthesis</keyword>
<keyword id="KW-0443">Lipid metabolism</keyword>
<keyword id="KW-0511">Multifunctional enzyme</keyword>
<keyword id="KW-1185">Reference proteome</keyword>
<keyword id="KW-0808">Transferase</keyword>
<gene>
    <name type="ordered locus">Cj1303</name>
</gene>